<proteinExistence type="inferred from homology"/>
<keyword id="KW-0560">Oxidoreductase</keyword>
<keyword id="KW-0575">Peroxidase</keyword>
<comment type="similarity">
    <text evidence="2">Belongs to the glutathione peroxidase family.</text>
</comment>
<protein>
    <recommendedName>
        <fullName>Glutathione peroxidase homolog BsaA</fullName>
        <ecNumber>1.-.-.-</ecNumber>
    </recommendedName>
</protein>
<reference key="1">
    <citation type="journal article" date="2003" name="Mol. Microbiol.">
        <title>Genome-based analysis of virulence genes in a non-biofilm-forming Staphylococcus epidermidis strain (ATCC 12228).</title>
        <authorList>
            <person name="Zhang Y.-Q."/>
            <person name="Ren S.-X."/>
            <person name="Li H.-L."/>
            <person name="Wang Y.-X."/>
            <person name="Fu G."/>
            <person name="Yang J."/>
            <person name="Qin Z.-Q."/>
            <person name="Miao Y.-G."/>
            <person name="Wang W.-Y."/>
            <person name="Chen R.-S."/>
            <person name="Shen Y."/>
            <person name="Chen Z."/>
            <person name="Yuan Z.-H."/>
            <person name="Zhao G.-P."/>
            <person name="Qu D."/>
            <person name="Danchin A."/>
            <person name="Wen Y.-M."/>
        </authorList>
    </citation>
    <scope>NUCLEOTIDE SEQUENCE [LARGE SCALE GENOMIC DNA]</scope>
    <source>
        <strain>ATCC 12228 / FDA PCI 1200</strain>
    </source>
</reference>
<sequence>MESIYDFVVQKNNGESYKLEQYKGDVMLIVNTASECGFTPQFEGLQKLYDEYKDQRFIILGFPCNQFGGQEPGSGEEAAQNCKINYGVTFPIHEKVDVKGDNQHPLFHFLTNAAKGMINEKIKWNFTKFLIDREGNVIKRFSPQKKPEQIKTEIEKLL</sequence>
<gene>
    <name type="primary">bsaA</name>
    <name type="ordered locus">SE_0983</name>
</gene>
<evidence type="ECO:0000250" key="1"/>
<evidence type="ECO:0000305" key="2"/>
<name>BSAA_STAES</name>
<dbReference type="EC" id="1.-.-.-"/>
<dbReference type="EMBL" id="AE015929">
    <property type="protein sequence ID" value="AAO04580.1"/>
    <property type="molecule type" value="Genomic_DNA"/>
</dbReference>
<dbReference type="RefSeq" id="NP_764538.1">
    <property type="nucleotide sequence ID" value="NC_004461.1"/>
</dbReference>
<dbReference type="RefSeq" id="WP_001829502.1">
    <property type="nucleotide sequence ID" value="NZ_WBME01000001.1"/>
</dbReference>
<dbReference type="SMR" id="Q8CSR9"/>
<dbReference type="PeroxiBase" id="3986">
    <property type="entry name" value="SepGPx02"/>
</dbReference>
<dbReference type="KEGG" id="sep:SE_0983"/>
<dbReference type="PATRIC" id="fig|176280.10.peg.957"/>
<dbReference type="eggNOG" id="COG0386">
    <property type="taxonomic scope" value="Bacteria"/>
</dbReference>
<dbReference type="HOGENOM" id="CLU_029507_4_0_9"/>
<dbReference type="OrthoDB" id="9789406at2"/>
<dbReference type="Proteomes" id="UP000001411">
    <property type="component" value="Chromosome"/>
</dbReference>
<dbReference type="GO" id="GO:0004601">
    <property type="term" value="F:peroxidase activity"/>
    <property type="evidence" value="ECO:0007669"/>
    <property type="project" value="UniProtKB-KW"/>
</dbReference>
<dbReference type="GO" id="GO:0034599">
    <property type="term" value="P:cellular response to oxidative stress"/>
    <property type="evidence" value="ECO:0007669"/>
    <property type="project" value="TreeGrafter"/>
</dbReference>
<dbReference type="CDD" id="cd00340">
    <property type="entry name" value="GSH_Peroxidase"/>
    <property type="match status" value="1"/>
</dbReference>
<dbReference type="FunFam" id="3.40.30.10:FF:000010">
    <property type="entry name" value="Glutathione peroxidase"/>
    <property type="match status" value="1"/>
</dbReference>
<dbReference type="Gene3D" id="3.40.30.10">
    <property type="entry name" value="Glutaredoxin"/>
    <property type="match status" value="1"/>
</dbReference>
<dbReference type="InterPro" id="IPR000889">
    <property type="entry name" value="Glutathione_peroxidase"/>
</dbReference>
<dbReference type="InterPro" id="IPR029760">
    <property type="entry name" value="GPX_CS"/>
</dbReference>
<dbReference type="InterPro" id="IPR036249">
    <property type="entry name" value="Thioredoxin-like_sf"/>
</dbReference>
<dbReference type="PANTHER" id="PTHR11592">
    <property type="entry name" value="GLUTATHIONE PEROXIDASE"/>
    <property type="match status" value="1"/>
</dbReference>
<dbReference type="PANTHER" id="PTHR11592:SF78">
    <property type="entry name" value="GLUTATHIONE PEROXIDASE"/>
    <property type="match status" value="1"/>
</dbReference>
<dbReference type="Pfam" id="PF00255">
    <property type="entry name" value="GSHPx"/>
    <property type="match status" value="1"/>
</dbReference>
<dbReference type="PIRSF" id="PIRSF000303">
    <property type="entry name" value="Glutathion_perox"/>
    <property type="match status" value="1"/>
</dbReference>
<dbReference type="PRINTS" id="PR01011">
    <property type="entry name" value="GLUTPROXDASE"/>
</dbReference>
<dbReference type="SUPFAM" id="SSF52833">
    <property type="entry name" value="Thioredoxin-like"/>
    <property type="match status" value="1"/>
</dbReference>
<dbReference type="PROSITE" id="PS00763">
    <property type="entry name" value="GLUTATHIONE_PEROXID_2"/>
    <property type="match status" value="1"/>
</dbReference>
<dbReference type="PROSITE" id="PS51355">
    <property type="entry name" value="GLUTATHIONE_PEROXID_3"/>
    <property type="match status" value="1"/>
</dbReference>
<accession>Q8CSR9</accession>
<feature type="chain" id="PRO_0000066656" description="Glutathione peroxidase homolog BsaA">
    <location>
        <begin position="1"/>
        <end position="158"/>
    </location>
</feature>
<feature type="active site" evidence="1">
    <location>
        <position position="36"/>
    </location>
</feature>
<organism>
    <name type="scientific">Staphylococcus epidermidis (strain ATCC 12228 / FDA PCI 1200)</name>
    <dbReference type="NCBI Taxonomy" id="176280"/>
    <lineage>
        <taxon>Bacteria</taxon>
        <taxon>Bacillati</taxon>
        <taxon>Bacillota</taxon>
        <taxon>Bacilli</taxon>
        <taxon>Bacillales</taxon>
        <taxon>Staphylococcaceae</taxon>
        <taxon>Staphylococcus</taxon>
    </lineage>
</organism>